<comment type="function">
    <text evidence="1">Part of the high-affinity ATP-driven potassium transport (or Kdp) system, which catalyzes the hydrolysis of ATP coupled with the electrogenic transport of potassium into the cytoplasm. This subunit is responsible for energy coupling to the transport system and for the release of the potassium ions to the cytoplasm.</text>
</comment>
<comment type="catalytic activity">
    <reaction evidence="1">
        <text>K(+)(out) + ATP + H2O = K(+)(in) + ADP + phosphate + H(+)</text>
        <dbReference type="Rhea" id="RHEA:16777"/>
        <dbReference type="ChEBI" id="CHEBI:15377"/>
        <dbReference type="ChEBI" id="CHEBI:15378"/>
        <dbReference type="ChEBI" id="CHEBI:29103"/>
        <dbReference type="ChEBI" id="CHEBI:30616"/>
        <dbReference type="ChEBI" id="CHEBI:43474"/>
        <dbReference type="ChEBI" id="CHEBI:456216"/>
        <dbReference type="EC" id="7.2.2.6"/>
    </reaction>
    <physiologicalReaction direction="left-to-right" evidence="1">
        <dbReference type="Rhea" id="RHEA:16778"/>
    </physiologicalReaction>
</comment>
<comment type="subunit">
    <text evidence="1">The system is composed of three essential subunits: KdpA, KdpB and KdpC.</text>
</comment>
<comment type="subcellular location">
    <subcellularLocation>
        <location evidence="1">Cell membrane</location>
        <topology evidence="1">Multi-pass membrane protein</topology>
    </subcellularLocation>
</comment>
<comment type="similarity">
    <text evidence="1">Belongs to the cation transport ATPase (P-type) (TC 3.A.3) family. Type IA subfamily.</text>
</comment>
<protein>
    <recommendedName>
        <fullName evidence="1">Potassium-transporting ATPase ATP-binding subunit</fullName>
        <ecNumber evidence="1">7.2.2.6</ecNumber>
    </recommendedName>
    <alternativeName>
        <fullName evidence="1">ATP phosphohydrolase [potassium-transporting] B chain</fullName>
    </alternativeName>
    <alternativeName>
        <fullName evidence="1">Potassium-binding and translocating subunit B</fullName>
    </alternativeName>
    <alternativeName>
        <fullName evidence="1">Potassium-translocating ATPase B chain</fullName>
    </alternativeName>
</protein>
<evidence type="ECO:0000255" key="1">
    <source>
        <dbReference type="HAMAP-Rule" id="MF_00285"/>
    </source>
</evidence>
<name>KDPB_BACC3</name>
<feature type="chain" id="PRO_1000132603" description="Potassium-transporting ATPase ATP-binding subunit">
    <location>
        <begin position="1"/>
        <end position="692"/>
    </location>
</feature>
<feature type="transmembrane region" description="Helical" evidence="1">
    <location>
        <begin position="50"/>
        <end position="70"/>
    </location>
</feature>
<feature type="transmembrane region" description="Helical" evidence="1">
    <location>
        <begin position="77"/>
        <end position="97"/>
    </location>
</feature>
<feature type="transmembrane region" description="Helical" evidence="1">
    <location>
        <begin position="240"/>
        <end position="260"/>
    </location>
</feature>
<feature type="transmembrane region" description="Helical" evidence="1">
    <location>
        <begin position="266"/>
        <end position="286"/>
    </location>
</feature>
<feature type="transmembrane region" description="Helical" evidence="1">
    <location>
        <begin position="600"/>
        <end position="620"/>
    </location>
</feature>
<feature type="transmembrane region" description="Helical" evidence="1">
    <location>
        <begin position="628"/>
        <end position="648"/>
    </location>
</feature>
<feature type="transmembrane region" description="Helical" evidence="1">
    <location>
        <begin position="672"/>
        <end position="692"/>
    </location>
</feature>
<feature type="active site" description="4-aspartylphosphate intermediate" evidence="1">
    <location>
        <position position="319"/>
    </location>
</feature>
<feature type="binding site" evidence="1">
    <location>
        <position position="356"/>
    </location>
    <ligand>
        <name>ATP</name>
        <dbReference type="ChEBI" id="CHEBI:30616"/>
    </ligand>
</feature>
<feature type="binding site" evidence="1">
    <location>
        <position position="360"/>
    </location>
    <ligand>
        <name>ATP</name>
        <dbReference type="ChEBI" id="CHEBI:30616"/>
    </ligand>
</feature>
<feature type="binding site" evidence="1">
    <location>
        <begin position="388"/>
        <end position="395"/>
    </location>
    <ligand>
        <name>ATP</name>
        <dbReference type="ChEBI" id="CHEBI:30616"/>
    </ligand>
</feature>
<feature type="binding site" evidence="1">
    <location>
        <position position="407"/>
    </location>
    <ligand>
        <name>ATP</name>
        <dbReference type="ChEBI" id="CHEBI:30616"/>
    </ligand>
</feature>
<feature type="binding site" evidence="1">
    <location>
        <position position="530"/>
    </location>
    <ligand>
        <name>Mg(2+)</name>
        <dbReference type="ChEBI" id="CHEBI:18420"/>
    </ligand>
</feature>
<feature type="binding site" evidence="1">
    <location>
        <position position="534"/>
    </location>
    <ligand>
        <name>Mg(2+)</name>
        <dbReference type="ChEBI" id="CHEBI:18420"/>
    </ligand>
</feature>
<sequence length="692" mass="74090">MMRPIVVKEKQIHVVEDEVRQAKTMDRDIVKHAMKQSFAKLNPKVMIKNPIMFVVEIGFIITFILSFLPSHSSSVPGWFNITVSLILLFTVLFANFAEALAEGRGKAQADSLKQSKKDVFANVVKENGDIVQVSATDLRKGDLVIVKQGEMIPSDGEVIKGLASVDESAITGESAPVIKEAGGDFCSVTGGTMVVSDEITIVITSNPGESFIDKMISLVEGAARQKTPNEIALNTVLTSLTLIFLIVVVTLPIFTNYLGFQIDTAVLVALLVCLIPTTIGGLLSAIGIAGMDRVTKFNVLAMSGKAVEAAGDINTIILDKTGTITFGNRMAHTLLPVGNETIEQVGKWAAISSVLDETPEGRSVIEYVKTKSISYNREIAEQGEFVPFKAETRMSGVDLQDGTKVRKGAVGSVIEWVRSQGGTIPKDVNQKADFISKEGGTPLVVAVDNRIYGLIYLKDTVKPGMRERFEQLRQMGIKTVMCTGDNPLTAATIAKEAGVDEFVAECKPEDKIAVIKAEQDKGKLVAMTGDGTNDAPALAQADVGLAMNSGTTAAKEAANMIDLDSNPTKIIEVVGIGKQLLMTRGALTTFSIANDIAKYFAIIPAMFTLAIPQMEALNIMKLTSPLSAILSALIFNAVIIPLLIPLAMKGIAYKPMSSNALLGRNLLIYGLGGVIVPFIGIKVIDIIVGLFI</sequence>
<organism>
    <name type="scientific">Bacillus cereus (strain 03BB102)</name>
    <dbReference type="NCBI Taxonomy" id="572264"/>
    <lineage>
        <taxon>Bacteria</taxon>
        <taxon>Bacillati</taxon>
        <taxon>Bacillota</taxon>
        <taxon>Bacilli</taxon>
        <taxon>Bacillales</taxon>
        <taxon>Bacillaceae</taxon>
        <taxon>Bacillus</taxon>
        <taxon>Bacillus cereus group</taxon>
    </lineage>
</organism>
<keyword id="KW-0067">ATP-binding</keyword>
<keyword id="KW-1003">Cell membrane</keyword>
<keyword id="KW-0406">Ion transport</keyword>
<keyword id="KW-0460">Magnesium</keyword>
<keyword id="KW-0472">Membrane</keyword>
<keyword id="KW-0479">Metal-binding</keyword>
<keyword id="KW-0547">Nucleotide-binding</keyword>
<keyword id="KW-0597">Phosphoprotein</keyword>
<keyword id="KW-0630">Potassium</keyword>
<keyword id="KW-0633">Potassium transport</keyword>
<keyword id="KW-1278">Translocase</keyword>
<keyword id="KW-0812">Transmembrane</keyword>
<keyword id="KW-1133">Transmembrane helix</keyword>
<keyword id="KW-0813">Transport</keyword>
<accession>C1EYK0</accession>
<gene>
    <name evidence="1" type="primary">kdpB</name>
    <name type="ordered locus">BCA_0804</name>
</gene>
<proteinExistence type="inferred from homology"/>
<dbReference type="EC" id="7.2.2.6" evidence="1"/>
<dbReference type="EMBL" id="CP001407">
    <property type="protein sequence ID" value="ACO30079.1"/>
    <property type="molecule type" value="Genomic_DNA"/>
</dbReference>
<dbReference type="SMR" id="C1EYK0"/>
<dbReference type="KEGG" id="bcx:BCA_0804"/>
<dbReference type="Proteomes" id="UP000002210">
    <property type="component" value="Chromosome"/>
</dbReference>
<dbReference type="GO" id="GO:0005886">
    <property type="term" value="C:plasma membrane"/>
    <property type="evidence" value="ECO:0007669"/>
    <property type="project" value="UniProtKB-SubCell"/>
</dbReference>
<dbReference type="GO" id="GO:0005524">
    <property type="term" value="F:ATP binding"/>
    <property type="evidence" value="ECO:0007669"/>
    <property type="project" value="UniProtKB-UniRule"/>
</dbReference>
<dbReference type="GO" id="GO:0016887">
    <property type="term" value="F:ATP hydrolysis activity"/>
    <property type="evidence" value="ECO:0007669"/>
    <property type="project" value="InterPro"/>
</dbReference>
<dbReference type="GO" id="GO:0000287">
    <property type="term" value="F:magnesium ion binding"/>
    <property type="evidence" value="ECO:0007669"/>
    <property type="project" value="UniProtKB-UniRule"/>
</dbReference>
<dbReference type="GO" id="GO:0008556">
    <property type="term" value="F:P-type potassium transmembrane transporter activity"/>
    <property type="evidence" value="ECO:0007669"/>
    <property type="project" value="UniProtKB-UniRule"/>
</dbReference>
<dbReference type="CDD" id="cd02078">
    <property type="entry name" value="P-type_ATPase_K"/>
    <property type="match status" value="1"/>
</dbReference>
<dbReference type="FunFam" id="2.70.150.10:FF:000010">
    <property type="entry name" value="Potassium-transporting ATPase ATP-binding subunit"/>
    <property type="match status" value="1"/>
</dbReference>
<dbReference type="FunFam" id="3.40.1110.10:FF:000007">
    <property type="entry name" value="Potassium-transporting ATPase ATP-binding subunit"/>
    <property type="match status" value="1"/>
</dbReference>
<dbReference type="Gene3D" id="3.40.1110.10">
    <property type="entry name" value="Calcium-transporting ATPase, cytoplasmic domain N"/>
    <property type="match status" value="1"/>
</dbReference>
<dbReference type="Gene3D" id="2.70.150.10">
    <property type="entry name" value="Calcium-transporting ATPase, cytoplasmic transduction domain A"/>
    <property type="match status" value="1"/>
</dbReference>
<dbReference type="Gene3D" id="3.40.50.1000">
    <property type="entry name" value="HAD superfamily/HAD-like"/>
    <property type="match status" value="1"/>
</dbReference>
<dbReference type="HAMAP" id="MF_00285">
    <property type="entry name" value="KdpB"/>
    <property type="match status" value="1"/>
</dbReference>
<dbReference type="InterPro" id="IPR023299">
    <property type="entry name" value="ATPase_P-typ_cyto_dom_N"/>
</dbReference>
<dbReference type="InterPro" id="IPR018303">
    <property type="entry name" value="ATPase_P-typ_P_site"/>
</dbReference>
<dbReference type="InterPro" id="IPR023298">
    <property type="entry name" value="ATPase_P-typ_TM_dom_sf"/>
</dbReference>
<dbReference type="InterPro" id="IPR008250">
    <property type="entry name" value="ATPase_P-typ_transduc_dom_A_sf"/>
</dbReference>
<dbReference type="InterPro" id="IPR036412">
    <property type="entry name" value="HAD-like_sf"/>
</dbReference>
<dbReference type="InterPro" id="IPR023214">
    <property type="entry name" value="HAD_sf"/>
</dbReference>
<dbReference type="InterPro" id="IPR006391">
    <property type="entry name" value="P-type_ATPase_bsu_IA"/>
</dbReference>
<dbReference type="InterPro" id="IPR001757">
    <property type="entry name" value="P_typ_ATPase"/>
</dbReference>
<dbReference type="InterPro" id="IPR044492">
    <property type="entry name" value="P_typ_ATPase_HD_dom"/>
</dbReference>
<dbReference type="NCBIfam" id="TIGR01494">
    <property type="entry name" value="ATPase_P-type"/>
    <property type="match status" value="2"/>
</dbReference>
<dbReference type="NCBIfam" id="TIGR01497">
    <property type="entry name" value="kdpB"/>
    <property type="match status" value="1"/>
</dbReference>
<dbReference type="PANTHER" id="PTHR43743">
    <property type="entry name" value="POTASSIUM-TRANSPORTING ATPASE ATP-BINDING SUBUNIT"/>
    <property type="match status" value="1"/>
</dbReference>
<dbReference type="PANTHER" id="PTHR43743:SF1">
    <property type="entry name" value="POTASSIUM-TRANSPORTING ATPASE ATP-BINDING SUBUNIT"/>
    <property type="match status" value="1"/>
</dbReference>
<dbReference type="Pfam" id="PF00122">
    <property type="entry name" value="E1-E2_ATPase"/>
    <property type="match status" value="1"/>
</dbReference>
<dbReference type="Pfam" id="PF00702">
    <property type="entry name" value="Hydrolase"/>
    <property type="match status" value="1"/>
</dbReference>
<dbReference type="PRINTS" id="PR00119">
    <property type="entry name" value="CATATPASE"/>
</dbReference>
<dbReference type="SFLD" id="SFLDS00003">
    <property type="entry name" value="Haloacid_Dehalogenase"/>
    <property type="match status" value="1"/>
</dbReference>
<dbReference type="SFLD" id="SFLDF00027">
    <property type="entry name" value="p-type_atpase"/>
    <property type="match status" value="1"/>
</dbReference>
<dbReference type="SUPFAM" id="SSF81653">
    <property type="entry name" value="Calcium ATPase, transduction domain A"/>
    <property type="match status" value="1"/>
</dbReference>
<dbReference type="SUPFAM" id="SSF81665">
    <property type="entry name" value="Calcium ATPase, transmembrane domain M"/>
    <property type="match status" value="1"/>
</dbReference>
<dbReference type="SUPFAM" id="SSF56784">
    <property type="entry name" value="HAD-like"/>
    <property type="match status" value="1"/>
</dbReference>
<dbReference type="PROSITE" id="PS00154">
    <property type="entry name" value="ATPASE_E1_E2"/>
    <property type="match status" value="1"/>
</dbReference>
<reference key="1">
    <citation type="submission" date="2009-02" db="EMBL/GenBank/DDBJ databases">
        <title>Genome sequence of Bacillus cereus 03BB102.</title>
        <authorList>
            <person name="Dodson R.J."/>
            <person name="Jackson P."/>
            <person name="Munk A.C."/>
            <person name="Brettin T."/>
            <person name="Bruce D."/>
            <person name="Detter C."/>
            <person name="Tapia R."/>
            <person name="Han C."/>
            <person name="Sutton G."/>
            <person name="Sims D."/>
        </authorList>
    </citation>
    <scope>NUCLEOTIDE SEQUENCE [LARGE SCALE GENOMIC DNA]</scope>
    <source>
        <strain>03BB102</strain>
    </source>
</reference>